<name>BSHC_BACC3</name>
<sequence>MEIKEISVPQQGVVADYMNGKKEIQSCFDYMLTEDAFKQRVQDLREREFFRQDLVTHLLEYNTKLQAGEATIQNVKALGDENTYVVIAGQQAGLLTGPLYTIHKIISVLQLAKEKEESLGVKVVPVFWIAGEDHDMDEINHTFVTKNKKIKKTIFHDRNPKKASASESELSLEDCRKWIEEIFKTYPETNFTKDVLQFVDDSLRKSNTYVDFFGHLIMKMFVNSGLILVDSHHPELRKLEVPFFKQIVSKYKEVQEGLHNQQEVIKELGYKPIIETKSNAVHIFMEIDNERVLLEDNQGKFVGKDGTYSFSYEELIEEMERSPERFSNNVVTRPLMQEYVFPTLAFIGGPGELAYWSELQQVFHTIGFRMPPVVPRITITYIERDIATDLHDLQLQERDPFLNNVDKLRENWLSNQIEEPIDDRFVEAKKEIMNIHTSLQQFVKEIDPGLSAFAGKNEFKINEQIELLERMLKRNVEKKHEVELNKFRRIQFALRPLGAPQERVWNVCYYLNQFGLDFVDHVMEKTFSWNGKHHVIKL</sequence>
<feature type="chain" id="PRO_1000188716" description="Putative cysteine ligase BshC">
    <location>
        <begin position="1"/>
        <end position="538"/>
    </location>
</feature>
<feature type="coiled-coil region" evidence="1">
    <location>
        <begin position="460"/>
        <end position="484"/>
    </location>
</feature>
<accession>C1EPT3</accession>
<protein>
    <recommendedName>
        <fullName evidence="1">Putative cysteine ligase BshC</fullName>
        <ecNumber evidence="1">6.-.-.-</ecNumber>
    </recommendedName>
</protein>
<comment type="function">
    <text evidence="1">Involved in bacillithiol (BSH) biosynthesis. May catalyze the last step of the pathway, the addition of cysteine to glucosamine malate (GlcN-Mal) to generate BSH.</text>
</comment>
<comment type="similarity">
    <text evidence="1">Belongs to the BshC family.</text>
</comment>
<dbReference type="EC" id="6.-.-.-" evidence="1"/>
<dbReference type="EMBL" id="CP001407">
    <property type="protein sequence ID" value="ACO30334.1"/>
    <property type="molecule type" value="Genomic_DNA"/>
</dbReference>
<dbReference type="RefSeq" id="WP_000403058.1">
    <property type="nucleotide sequence ID" value="NZ_CP009318.1"/>
</dbReference>
<dbReference type="SMR" id="C1EPT3"/>
<dbReference type="KEGG" id="bcx:BCA_4023"/>
<dbReference type="PATRIC" id="fig|572264.18.peg.3976"/>
<dbReference type="Proteomes" id="UP000002210">
    <property type="component" value="Chromosome"/>
</dbReference>
<dbReference type="GO" id="GO:0016874">
    <property type="term" value="F:ligase activity"/>
    <property type="evidence" value="ECO:0007669"/>
    <property type="project" value="UniProtKB-UniRule"/>
</dbReference>
<dbReference type="HAMAP" id="MF_01867">
    <property type="entry name" value="BshC"/>
    <property type="match status" value="1"/>
</dbReference>
<dbReference type="InterPro" id="IPR011199">
    <property type="entry name" value="Bacillithiol_biosynth_BshC"/>
</dbReference>
<dbReference type="InterPro" id="IPR055399">
    <property type="entry name" value="CC_BshC"/>
</dbReference>
<dbReference type="InterPro" id="IPR055398">
    <property type="entry name" value="Rossmann-like_BshC"/>
</dbReference>
<dbReference type="NCBIfam" id="TIGR03998">
    <property type="entry name" value="thiol_BshC"/>
    <property type="match status" value="1"/>
</dbReference>
<dbReference type="Pfam" id="PF24850">
    <property type="entry name" value="CC_BshC"/>
    <property type="match status" value="1"/>
</dbReference>
<dbReference type="Pfam" id="PF10079">
    <property type="entry name" value="Rossmann-like_BshC"/>
    <property type="match status" value="1"/>
</dbReference>
<dbReference type="PIRSF" id="PIRSF012535">
    <property type="entry name" value="UCP012535"/>
    <property type="match status" value="1"/>
</dbReference>
<organism>
    <name type="scientific">Bacillus cereus (strain 03BB102)</name>
    <dbReference type="NCBI Taxonomy" id="572264"/>
    <lineage>
        <taxon>Bacteria</taxon>
        <taxon>Bacillati</taxon>
        <taxon>Bacillota</taxon>
        <taxon>Bacilli</taxon>
        <taxon>Bacillales</taxon>
        <taxon>Bacillaceae</taxon>
        <taxon>Bacillus</taxon>
        <taxon>Bacillus cereus group</taxon>
    </lineage>
</organism>
<proteinExistence type="inferred from homology"/>
<gene>
    <name evidence="1" type="primary">bshC</name>
    <name type="ordered locus">BCA_4023</name>
</gene>
<reference key="1">
    <citation type="submission" date="2009-02" db="EMBL/GenBank/DDBJ databases">
        <title>Genome sequence of Bacillus cereus 03BB102.</title>
        <authorList>
            <person name="Dodson R.J."/>
            <person name="Jackson P."/>
            <person name="Munk A.C."/>
            <person name="Brettin T."/>
            <person name="Bruce D."/>
            <person name="Detter C."/>
            <person name="Tapia R."/>
            <person name="Han C."/>
            <person name="Sutton G."/>
            <person name="Sims D."/>
        </authorList>
    </citation>
    <scope>NUCLEOTIDE SEQUENCE [LARGE SCALE GENOMIC DNA]</scope>
    <source>
        <strain>03BB102</strain>
    </source>
</reference>
<keyword id="KW-0175">Coiled coil</keyword>
<keyword id="KW-0436">Ligase</keyword>
<evidence type="ECO:0000255" key="1">
    <source>
        <dbReference type="HAMAP-Rule" id="MF_01867"/>
    </source>
</evidence>